<reference key="1">
    <citation type="journal article" date="2008" name="BMC Genomics">
        <title>Genome sequence and rapid evolution of the rice pathogen Xanthomonas oryzae pv. oryzae PXO99A.</title>
        <authorList>
            <person name="Salzberg S.L."/>
            <person name="Sommer D.D."/>
            <person name="Schatz M.C."/>
            <person name="Phillippy A.M."/>
            <person name="Rabinowicz P.D."/>
            <person name="Tsuge S."/>
            <person name="Furutani A."/>
            <person name="Ochiai H."/>
            <person name="Delcher A.L."/>
            <person name="Kelley D."/>
            <person name="Madupu R."/>
            <person name="Puiu D."/>
            <person name="Radune D."/>
            <person name="Shumway M."/>
            <person name="Trapnell C."/>
            <person name="Aparna G."/>
            <person name="Jha G."/>
            <person name="Pandey A."/>
            <person name="Patil P.B."/>
            <person name="Ishihara H."/>
            <person name="Meyer D.F."/>
            <person name="Szurek B."/>
            <person name="Verdier V."/>
            <person name="Koebnik R."/>
            <person name="Dow J.M."/>
            <person name="Ryan R.P."/>
            <person name="Hirata H."/>
            <person name="Tsuyumu S."/>
            <person name="Won Lee S."/>
            <person name="Seo Y.-S."/>
            <person name="Sriariyanum M."/>
            <person name="Ronald P.C."/>
            <person name="Sonti R.V."/>
            <person name="Van Sluys M.-A."/>
            <person name="Leach J.E."/>
            <person name="White F.F."/>
            <person name="Bogdanove A.J."/>
        </authorList>
    </citation>
    <scope>NUCLEOTIDE SEQUENCE [LARGE SCALE GENOMIC DNA]</scope>
    <source>
        <strain>PXO99A</strain>
    </source>
</reference>
<accession>B2STU3</accession>
<evidence type="ECO:0000250" key="1"/>
<evidence type="ECO:0000255" key="2">
    <source>
        <dbReference type="HAMAP-Rule" id="MF_00103"/>
    </source>
</evidence>
<proteinExistence type="inferred from homology"/>
<comment type="function">
    <text evidence="2">Involved in base excision repair of DNA damaged by oxidation or by mutagenic agents. Acts as a DNA glycosylase that recognizes and removes damaged bases. Has a preference for oxidized purines, such as 7,8-dihydro-8-oxoguanine (8-oxoG). Has AP (apurinic/apyrimidinic) lyase activity and introduces nicks in the DNA strand. Cleaves the DNA backbone by beta-delta elimination to generate a single-strand break at the site of the removed base with both 3'- and 5'-phosphates.</text>
</comment>
<comment type="catalytic activity">
    <reaction evidence="2">
        <text>Hydrolysis of DNA containing ring-opened 7-methylguanine residues, releasing 2,6-diamino-4-hydroxy-5-(N-methyl)formamidopyrimidine.</text>
        <dbReference type="EC" id="3.2.2.23"/>
    </reaction>
</comment>
<comment type="catalytic activity">
    <reaction evidence="2">
        <text>2'-deoxyribonucleotide-(2'-deoxyribose 5'-phosphate)-2'-deoxyribonucleotide-DNA = a 3'-end 2'-deoxyribonucleotide-(2,3-dehydro-2,3-deoxyribose 5'-phosphate)-DNA + a 5'-end 5'-phospho-2'-deoxyribonucleoside-DNA + H(+)</text>
        <dbReference type="Rhea" id="RHEA:66592"/>
        <dbReference type="Rhea" id="RHEA-COMP:13180"/>
        <dbReference type="Rhea" id="RHEA-COMP:16897"/>
        <dbReference type="Rhea" id="RHEA-COMP:17067"/>
        <dbReference type="ChEBI" id="CHEBI:15378"/>
        <dbReference type="ChEBI" id="CHEBI:136412"/>
        <dbReference type="ChEBI" id="CHEBI:157695"/>
        <dbReference type="ChEBI" id="CHEBI:167181"/>
        <dbReference type="EC" id="4.2.99.18"/>
    </reaction>
</comment>
<comment type="cofactor">
    <cofactor evidence="2">
        <name>Zn(2+)</name>
        <dbReference type="ChEBI" id="CHEBI:29105"/>
    </cofactor>
    <text evidence="2">Binds 1 zinc ion per subunit.</text>
</comment>
<comment type="subunit">
    <text evidence="2">Monomer.</text>
</comment>
<comment type="similarity">
    <text evidence="2">Belongs to the FPG family.</text>
</comment>
<organism>
    <name type="scientific">Xanthomonas oryzae pv. oryzae (strain PXO99A)</name>
    <dbReference type="NCBI Taxonomy" id="360094"/>
    <lineage>
        <taxon>Bacteria</taxon>
        <taxon>Pseudomonadati</taxon>
        <taxon>Pseudomonadota</taxon>
        <taxon>Gammaproteobacteria</taxon>
        <taxon>Lysobacterales</taxon>
        <taxon>Lysobacteraceae</taxon>
        <taxon>Xanthomonas</taxon>
    </lineage>
</organism>
<keyword id="KW-0227">DNA damage</keyword>
<keyword id="KW-0234">DNA repair</keyword>
<keyword id="KW-0238">DNA-binding</keyword>
<keyword id="KW-0326">Glycosidase</keyword>
<keyword id="KW-0378">Hydrolase</keyword>
<keyword id="KW-0456">Lyase</keyword>
<keyword id="KW-0479">Metal-binding</keyword>
<keyword id="KW-0511">Multifunctional enzyme</keyword>
<keyword id="KW-0862">Zinc</keyword>
<keyword id="KW-0863">Zinc-finger</keyword>
<protein>
    <recommendedName>
        <fullName evidence="2">Formamidopyrimidine-DNA glycosylase</fullName>
        <shortName evidence="2">Fapy-DNA glycosylase</shortName>
        <ecNumber evidence="2">3.2.2.23</ecNumber>
    </recommendedName>
    <alternativeName>
        <fullName evidence="2">DNA-(apurinic or apyrimidinic site) lyase MutM</fullName>
        <shortName evidence="2">AP lyase MutM</shortName>
        <ecNumber evidence="2">4.2.99.18</ecNumber>
    </alternativeName>
</protein>
<sequence>MPELPEVETTLRGLSPHLVGQRIHGVILRRPDLRWPIPEQIERLLPGATITNVRRRAKYLLIDTDAGGSALLHLGMSGSLRVLPGDTLPRAHDHVDISLQNGRVLRFNDPRRFGCLLWQSDIQAHELLAALGPEPLSEAFTGDYLHALAYGRRAPVKTFLMDQAVVVGVGNIYAAESLHCAGISPLREAGKVSLDRYRRLAAAVKDILSYAIRRGGTTLRDFISPDGAPGYFEQELTVYGREGEPCKQCGRVLKHAMIGQRATVWCGSCQR</sequence>
<name>FPG_XANOP</name>
<dbReference type="EC" id="3.2.2.23" evidence="2"/>
<dbReference type="EC" id="4.2.99.18" evidence="2"/>
<dbReference type="EMBL" id="CP000967">
    <property type="protein sequence ID" value="ACD61495.1"/>
    <property type="molecule type" value="Genomic_DNA"/>
</dbReference>
<dbReference type="RefSeq" id="WP_011407325.1">
    <property type="nucleotide sequence ID" value="NC_010717.2"/>
</dbReference>
<dbReference type="SMR" id="B2STU3"/>
<dbReference type="KEGG" id="xop:PXO_03200"/>
<dbReference type="eggNOG" id="COG0266">
    <property type="taxonomic scope" value="Bacteria"/>
</dbReference>
<dbReference type="HOGENOM" id="CLU_038423_1_1_6"/>
<dbReference type="Proteomes" id="UP000001740">
    <property type="component" value="Chromosome"/>
</dbReference>
<dbReference type="GO" id="GO:0034039">
    <property type="term" value="F:8-oxo-7,8-dihydroguanine DNA N-glycosylase activity"/>
    <property type="evidence" value="ECO:0007669"/>
    <property type="project" value="TreeGrafter"/>
</dbReference>
<dbReference type="GO" id="GO:0140078">
    <property type="term" value="F:class I DNA-(apurinic or apyrimidinic site) endonuclease activity"/>
    <property type="evidence" value="ECO:0007669"/>
    <property type="project" value="UniProtKB-EC"/>
</dbReference>
<dbReference type="GO" id="GO:0003684">
    <property type="term" value="F:damaged DNA binding"/>
    <property type="evidence" value="ECO:0007669"/>
    <property type="project" value="InterPro"/>
</dbReference>
<dbReference type="GO" id="GO:0008270">
    <property type="term" value="F:zinc ion binding"/>
    <property type="evidence" value="ECO:0007669"/>
    <property type="project" value="UniProtKB-UniRule"/>
</dbReference>
<dbReference type="GO" id="GO:0006284">
    <property type="term" value="P:base-excision repair"/>
    <property type="evidence" value="ECO:0007669"/>
    <property type="project" value="InterPro"/>
</dbReference>
<dbReference type="CDD" id="cd08966">
    <property type="entry name" value="EcFpg-like_N"/>
    <property type="match status" value="1"/>
</dbReference>
<dbReference type="FunFam" id="1.10.8.50:FF:000003">
    <property type="entry name" value="Formamidopyrimidine-DNA glycosylase"/>
    <property type="match status" value="1"/>
</dbReference>
<dbReference type="FunFam" id="3.20.190.10:FF:000001">
    <property type="entry name" value="Formamidopyrimidine-DNA glycosylase"/>
    <property type="match status" value="1"/>
</dbReference>
<dbReference type="Gene3D" id="1.10.8.50">
    <property type="match status" value="1"/>
</dbReference>
<dbReference type="Gene3D" id="3.20.190.10">
    <property type="entry name" value="MutM-like, N-terminal"/>
    <property type="match status" value="1"/>
</dbReference>
<dbReference type="HAMAP" id="MF_00103">
    <property type="entry name" value="Fapy_DNA_glycosyl"/>
    <property type="match status" value="1"/>
</dbReference>
<dbReference type="InterPro" id="IPR015886">
    <property type="entry name" value="DNA_glyclase/AP_lyase_DNA-bd"/>
</dbReference>
<dbReference type="InterPro" id="IPR015887">
    <property type="entry name" value="DNA_glyclase_Znf_dom_DNA_BS"/>
</dbReference>
<dbReference type="InterPro" id="IPR020629">
    <property type="entry name" value="Formamido-pyr_DNA_Glyclase"/>
</dbReference>
<dbReference type="InterPro" id="IPR012319">
    <property type="entry name" value="FPG_cat"/>
</dbReference>
<dbReference type="InterPro" id="IPR035937">
    <property type="entry name" value="MutM-like_N-ter"/>
</dbReference>
<dbReference type="InterPro" id="IPR010979">
    <property type="entry name" value="Ribosomal_uS13-like_H2TH"/>
</dbReference>
<dbReference type="InterPro" id="IPR000214">
    <property type="entry name" value="Znf_DNA_glyclase/AP_lyase"/>
</dbReference>
<dbReference type="InterPro" id="IPR010663">
    <property type="entry name" value="Znf_FPG/IleRS"/>
</dbReference>
<dbReference type="NCBIfam" id="TIGR00577">
    <property type="entry name" value="fpg"/>
    <property type="match status" value="1"/>
</dbReference>
<dbReference type="NCBIfam" id="NF002211">
    <property type="entry name" value="PRK01103.1"/>
    <property type="match status" value="1"/>
</dbReference>
<dbReference type="PANTHER" id="PTHR22993">
    <property type="entry name" value="FORMAMIDOPYRIMIDINE-DNA GLYCOSYLASE"/>
    <property type="match status" value="1"/>
</dbReference>
<dbReference type="PANTHER" id="PTHR22993:SF9">
    <property type="entry name" value="FORMAMIDOPYRIMIDINE-DNA GLYCOSYLASE"/>
    <property type="match status" value="1"/>
</dbReference>
<dbReference type="Pfam" id="PF01149">
    <property type="entry name" value="Fapy_DNA_glyco"/>
    <property type="match status" value="1"/>
</dbReference>
<dbReference type="Pfam" id="PF06831">
    <property type="entry name" value="H2TH"/>
    <property type="match status" value="1"/>
</dbReference>
<dbReference type="Pfam" id="PF06827">
    <property type="entry name" value="zf-FPG_IleRS"/>
    <property type="match status" value="1"/>
</dbReference>
<dbReference type="SMART" id="SM00898">
    <property type="entry name" value="Fapy_DNA_glyco"/>
    <property type="match status" value="1"/>
</dbReference>
<dbReference type="SMART" id="SM01232">
    <property type="entry name" value="H2TH"/>
    <property type="match status" value="1"/>
</dbReference>
<dbReference type="SUPFAM" id="SSF57716">
    <property type="entry name" value="Glucocorticoid receptor-like (DNA-binding domain)"/>
    <property type="match status" value="1"/>
</dbReference>
<dbReference type="SUPFAM" id="SSF81624">
    <property type="entry name" value="N-terminal domain of MutM-like DNA repair proteins"/>
    <property type="match status" value="1"/>
</dbReference>
<dbReference type="SUPFAM" id="SSF46946">
    <property type="entry name" value="S13-like H2TH domain"/>
    <property type="match status" value="1"/>
</dbReference>
<dbReference type="PROSITE" id="PS51068">
    <property type="entry name" value="FPG_CAT"/>
    <property type="match status" value="1"/>
</dbReference>
<dbReference type="PROSITE" id="PS01242">
    <property type="entry name" value="ZF_FPG_1"/>
    <property type="match status" value="1"/>
</dbReference>
<dbReference type="PROSITE" id="PS51066">
    <property type="entry name" value="ZF_FPG_2"/>
    <property type="match status" value="1"/>
</dbReference>
<feature type="initiator methionine" description="Removed" evidence="1">
    <location>
        <position position="1"/>
    </location>
</feature>
<feature type="chain" id="PRO_1000094086" description="Formamidopyrimidine-DNA glycosylase">
    <location>
        <begin position="2"/>
        <end position="271"/>
    </location>
</feature>
<feature type="zinc finger region" description="FPG-type" evidence="2">
    <location>
        <begin position="237"/>
        <end position="271"/>
    </location>
</feature>
<feature type="active site" description="Schiff-base intermediate with DNA" evidence="2">
    <location>
        <position position="2"/>
    </location>
</feature>
<feature type="active site" description="Proton donor" evidence="2">
    <location>
        <position position="3"/>
    </location>
</feature>
<feature type="active site" description="Proton donor; for beta-elimination activity" evidence="2">
    <location>
        <position position="58"/>
    </location>
</feature>
<feature type="active site" description="Proton donor; for delta-elimination activity" evidence="2">
    <location>
        <position position="261"/>
    </location>
</feature>
<feature type="binding site" evidence="2">
    <location>
        <position position="92"/>
    </location>
    <ligand>
        <name>DNA</name>
        <dbReference type="ChEBI" id="CHEBI:16991"/>
    </ligand>
</feature>
<feature type="binding site" evidence="2">
    <location>
        <position position="111"/>
    </location>
    <ligand>
        <name>DNA</name>
        <dbReference type="ChEBI" id="CHEBI:16991"/>
    </ligand>
</feature>
<feature type="binding site" evidence="2">
    <location>
        <position position="152"/>
    </location>
    <ligand>
        <name>DNA</name>
        <dbReference type="ChEBI" id="CHEBI:16991"/>
    </ligand>
</feature>
<gene>
    <name evidence="2" type="primary">mutM</name>
    <name evidence="2" type="synonym">fpg</name>
    <name type="ordered locus">PXO_03200</name>
</gene>